<comment type="subcellular location">
    <subcellularLocation>
        <location evidence="1">Bacterial flagellum basal body</location>
    </subcellularLocation>
</comment>
<comment type="similarity">
    <text evidence="1">Belongs to the FliE family.</text>
</comment>
<reference key="1">
    <citation type="journal article" date="2010" name="Genome Biol. Evol.">
        <title>Continuing evolution of Burkholderia mallei through genome reduction and large-scale rearrangements.</title>
        <authorList>
            <person name="Losada L."/>
            <person name="Ronning C.M."/>
            <person name="DeShazer D."/>
            <person name="Woods D."/>
            <person name="Fedorova N."/>
            <person name="Kim H.S."/>
            <person name="Shabalina S.A."/>
            <person name="Pearson T.R."/>
            <person name="Brinkac L."/>
            <person name="Tan P."/>
            <person name="Nandi T."/>
            <person name="Crabtree J."/>
            <person name="Badger J."/>
            <person name="Beckstrom-Sternberg S."/>
            <person name="Saqib M."/>
            <person name="Schutzer S.E."/>
            <person name="Keim P."/>
            <person name="Nierman W.C."/>
        </authorList>
    </citation>
    <scope>NUCLEOTIDE SEQUENCE [LARGE SCALE GENOMIC DNA]</scope>
    <source>
        <strain>SAVP1</strain>
    </source>
</reference>
<sequence>MVAPVNGIASALQQMQAMAAQAAGGASPATSLAGSGAASAGSFASAMKASLDKISGDQQKALGEAHAFEIGAQNVSLNDVMVDMQKANIGFQFGLQVRNKLVSAYNEIMQMSV</sequence>
<proteinExistence type="inferred from homology"/>
<keyword id="KW-0975">Bacterial flagellum</keyword>
<protein>
    <recommendedName>
        <fullName evidence="1">Flagellar hook-basal body complex protein FliE</fullName>
    </recommendedName>
</protein>
<dbReference type="EMBL" id="CP000526">
    <property type="protein sequence ID" value="ABM51378.1"/>
    <property type="molecule type" value="Genomic_DNA"/>
</dbReference>
<dbReference type="RefSeq" id="WP_004185219.1">
    <property type="nucleotide sequence ID" value="NC_008785.1"/>
</dbReference>
<dbReference type="SMR" id="A1V7N8"/>
<dbReference type="GeneID" id="92980950"/>
<dbReference type="KEGG" id="bmv:BMASAVP1_A2947"/>
<dbReference type="HOGENOM" id="CLU_147249_0_2_4"/>
<dbReference type="GO" id="GO:0009425">
    <property type="term" value="C:bacterial-type flagellum basal body"/>
    <property type="evidence" value="ECO:0007669"/>
    <property type="project" value="UniProtKB-SubCell"/>
</dbReference>
<dbReference type="GO" id="GO:0003774">
    <property type="term" value="F:cytoskeletal motor activity"/>
    <property type="evidence" value="ECO:0007669"/>
    <property type="project" value="InterPro"/>
</dbReference>
<dbReference type="GO" id="GO:0005198">
    <property type="term" value="F:structural molecule activity"/>
    <property type="evidence" value="ECO:0007669"/>
    <property type="project" value="InterPro"/>
</dbReference>
<dbReference type="GO" id="GO:0071973">
    <property type="term" value="P:bacterial-type flagellum-dependent cell motility"/>
    <property type="evidence" value="ECO:0007669"/>
    <property type="project" value="InterPro"/>
</dbReference>
<dbReference type="HAMAP" id="MF_00724">
    <property type="entry name" value="FliE"/>
    <property type="match status" value="1"/>
</dbReference>
<dbReference type="InterPro" id="IPR001624">
    <property type="entry name" value="FliE"/>
</dbReference>
<dbReference type="NCBIfam" id="TIGR00205">
    <property type="entry name" value="fliE"/>
    <property type="match status" value="1"/>
</dbReference>
<dbReference type="PANTHER" id="PTHR34653">
    <property type="match status" value="1"/>
</dbReference>
<dbReference type="PANTHER" id="PTHR34653:SF1">
    <property type="entry name" value="FLAGELLAR HOOK-BASAL BODY COMPLEX PROTEIN FLIE"/>
    <property type="match status" value="1"/>
</dbReference>
<dbReference type="Pfam" id="PF02049">
    <property type="entry name" value="FliE"/>
    <property type="match status" value="1"/>
</dbReference>
<dbReference type="PRINTS" id="PR01006">
    <property type="entry name" value="FLGHOOKFLIE"/>
</dbReference>
<feature type="chain" id="PRO_1000045849" description="Flagellar hook-basal body complex protein FliE">
    <location>
        <begin position="1"/>
        <end position="113"/>
    </location>
</feature>
<evidence type="ECO:0000255" key="1">
    <source>
        <dbReference type="HAMAP-Rule" id="MF_00724"/>
    </source>
</evidence>
<organism>
    <name type="scientific">Burkholderia mallei (strain SAVP1)</name>
    <dbReference type="NCBI Taxonomy" id="320388"/>
    <lineage>
        <taxon>Bacteria</taxon>
        <taxon>Pseudomonadati</taxon>
        <taxon>Pseudomonadota</taxon>
        <taxon>Betaproteobacteria</taxon>
        <taxon>Burkholderiales</taxon>
        <taxon>Burkholderiaceae</taxon>
        <taxon>Burkholderia</taxon>
        <taxon>pseudomallei group</taxon>
    </lineage>
</organism>
<name>FLIE_BURMS</name>
<accession>A1V7N8</accession>
<gene>
    <name evidence="1" type="primary">fliE</name>
    <name type="ordered locus">BMASAVP1_A2947</name>
</gene>